<organismHost>
    <name type="scientific">Blicca bjoerkna</name>
    <name type="common">white bream</name>
    <dbReference type="NCBI Taxonomy" id="58317"/>
</organismHost>
<accession>Q008X6</accession>
<comment type="function">
    <molecule>N7-guanine methyltransferase</molecule>
    <text evidence="14">Catalyzes the RNA N7-guanylyltransferase reaction to methylate the core cap structure GpppN-RNA into the type-0 cap (m)GpppN-RNA.</text>
</comment>
<comment type="function">
    <molecule>3C-like serine proteinase</molecule>
    <text evidence="17">The 3C-like serine proteinase is responsible for the majority of cleavages.</text>
</comment>
<comment type="function">
    <molecule>Helicase</molecule>
    <text evidence="1">The helicase which contains a zinc finger structure displays RNA and DNA duplex-unwinding activities with 5' to 3' polarity.</text>
</comment>
<comment type="function">
    <molecule>Exoribonuclease</molecule>
    <text evidence="13">The exoribonuclease acts on ssRNA in a 3' to 5' direction (PubMed:30058998). Most active on dsRNA substrates containing one or two non-paired 3'-terminal nucleotides, thereby probably increasing the fidelity of the viral RNA-dependent RNA polymerase by excising RNA 3'-end mismatches during viral RNA replication (PubMed:30058998).</text>
</comment>
<comment type="function">
    <molecule>Uridylate-specific endoribonuclease</molecule>
    <text evidence="1">NendoU is a Mn(2+)-dependent, uridylate-specific enzyme, which leaves 2'-3'-cyclic phosphates 5' to the cleaved bond.</text>
</comment>
<comment type="function">
    <molecule>Putative 2'-O-methyl transferase</molecule>
    <text evidence="2">Catalyzes the RNA 2'-O-ribose methyltransferase reaction to methylate the type-0 cap into the type-1 cap (m)GpppN(m)-RNA.</text>
</comment>
<comment type="catalytic activity">
    <molecule>N7-guanine methyltransferase</molecule>
    <reaction evidence="14">
        <text>a 5'-end (5'-triphosphoguanosine)-ribonucleoside in mRNA + S-adenosyl-L-methionine = a 5'-end (N(7)-methyl 5'-triphosphoguanosine)-ribonucleoside in mRNA + S-adenosyl-L-homocysteine</text>
        <dbReference type="Rhea" id="RHEA:67008"/>
        <dbReference type="Rhea" id="RHEA-COMP:17166"/>
        <dbReference type="Rhea" id="RHEA-COMP:17167"/>
        <dbReference type="ChEBI" id="CHEBI:57856"/>
        <dbReference type="ChEBI" id="CHEBI:59789"/>
        <dbReference type="ChEBI" id="CHEBI:156461"/>
        <dbReference type="ChEBI" id="CHEBI:167617"/>
        <dbReference type="EC" id="2.1.1.56"/>
    </reaction>
    <physiologicalReaction direction="left-to-right" evidence="14">
        <dbReference type="Rhea" id="RHEA:67009"/>
    </physiologicalReaction>
</comment>
<comment type="catalytic activity">
    <molecule>RNA-directed RNA polymerase</molecule>
    <reaction>
        <text>RNA(n) + a ribonucleoside 5'-triphosphate = RNA(n+1) + diphosphate</text>
        <dbReference type="Rhea" id="RHEA:21248"/>
        <dbReference type="Rhea" id="RHEA-COMP:14527"/>
        <dbReference type="Rhea" id="RHEA-COMP:17342"/>
        <dbReference type="ChEBI" id="CHEBI:33019"/>
        <dbReference type="ChEBI" id="CHEBI:61557"/>
        <dbReference type="ChEBI" id="CHEBI:140395"/>
        <dbReference type="EC" id="2.7.7.48"/>
    </reaction>
</comment>
<comment type="catalytic activity">
    <molecule>Helicase</molecule>
    <reaction>
        <text>ATP + H2O = ADP + phosphate + H(+)</text>
        <dbReference type="Rhea" id="RHEA:13065"/>
        <dbReference type="ChEBI" id="CHEBI:15377"/>
        <dbReference type="ChEBI" id="CHEBI:15378"/>
        <dbReference type="ChEBI" id="CHEBI:30616"/>
        <dbReference type="ChEBI" id="CHEBI:43474"/>
        <dbReference type="ChEBI" id="CHEBI:456216"/>
        <dbReference type="EC" id="3.6.4.12"/>
    </reaction>
</comment>
<comment type="catalytic activity">
    <molecule>Helicase</molecule>
    <reaction>
        <text>ATP + H2O = ADP + phosphate + H(+)</text>
        <dbReference type="Rhea" id="RHEA:13065"/>
        <dbReference type="ChEBI" id="CHEBI:15377"/>
        <dbReference type="ChEBI" id="CHEBI:15378"/>
        <dbReference type="ChEBI" id="CHEBI:30616"/>
        <dbReference type="ChEBI" id="CHEBI:43474"/>
        <dbReference type="ChEBI" id="CHEBI:456216"/>
        <dbReference type="EC" id="3.6.4.13"/>
    </reaction>
</comment>
<comment type="catalytic activity">
    <molecule>Putative 2'-O-methyl transferase</molecule>
    <reaction evidence="2">
        <text>a 5'-end (N(7)-methyl 5'-triphosphoguanosine)-ribonucleoside in mRNA + S-adenosyl-L-methionine = a 5'-end (N(7)-methyl 5'-triphosphoguanosine)-(2'-O-methyl-ribonucleoside) in mRNA + S-adenosyl-L-homocysteine + H(+)</text>
        <dbReference type="Rhea" id="RHEA:67020"/>
        <dbReference type="Rhea" id="RHEA-COMP:17167"/>
        <dbReference type="Rhea" id="RHEA-COMP:17168"/>
        <dbReference type="ChEBI" id="CHEBI:15378"/>
        <dbReference type="ChEBI" id="CHEBI:57856"/>
        <dbReference type="ChEBI" id="CHEBI:59789"/>
        <dbReference type="ChEBI" id="CHEBI:156461"/>
        <dbReference type="ChEBI" id="CHEBI:167609"/>
        <dbReference type="EC" id="2.1.1.57"/>
    </reaction>
    <physiologicalReaction direction="left-to-right" evidence="2">
        <dbReference type="Rhea" id="RHEA:67021"/>
    </physiologicalReaction>
</comment>
<comment type="cofactor">
    <molecule>Exoribonuclease</molecule>
    <cofactor evidence="13">
        <name>Mg(2+)</name>
        <dbReference type="ChEBI" id="CHEBI:18420"/>
    </cofactor>
</comment>
<comment type="biophysicochemical properties">
    <phDependence>
        <text evidence="14">Optimum pH is 8.5.</text>
    </phDependence>
</comment>
<comment type="subcellular location">
    <molecule>N7-guanine methyltransferase</molecule>
    <subcellularLocation>
        <location evidence="16">Host membrane</location>
        <topology evidence="16">Multi-pass membrane protein</topology>
    </subcellularLocation>
</comment>
<comment type="subcellular location">
    <molecule>Non-structural protein 2</molecule>
    <subcellularLocation>
        <location evidence="16">Host membrane</location>
        <topology evidence="16">Multi-pass membrane protein</topology>
    </subcellularLocation>
</comment>
<comment type="subcellular location">
    <molecule>Non-structural protein 4</molecule>
    <subcellularLocation>
        <location evidence="16">Host membrane</location>
        <topology evidence="16">Multi-pass membrane protein</topology>
    </subcellularLocation>
</comment>
<comment type="alternative products">
    <event type="ribosomal frameshifting"/>
    <isoform>
        <id>Q008X6-1</id>
        <name>Replicase polyprotein 1ab</name>
        <name>pp1ab</name>
        <sequence type="displayed"/>
    </isoform>
    <isoform>
        <id>Q008X5-1</id>
        <name>Replicase polyprotein 1a</name>
        <name>pp1a</name>
        <name>ORF1a polyprotein</name>
        <sequence type="external"/>
    </isoform>
</comment>
<comment type="domain">
    <molecule>Replicase polyprotein 1ab</molecule>
    <text evidence="1">The hydrophobic domains (HD) could mediate the membrane association of the replication complex and thereby alter the architecture of the host cell membrane.</text>
</comment>
<comment type="PTM">
    <molecule>Replicase polyprotein 1ab</molecule>
    <text evidence="12 16">Specific enzymatic cleavages in vivo by its own protease yield mature proteins (Probable). 3C-like serine proteinase is autocatalytically processed (PubMed:21068254). Two close N-terminal processing sites can be used, potentially resulting in 2 different processing products (PubMed:21068254). The preferential autocatalytic cleavage sites are displayed (PubMed:21068254). The polyprotein is certainly cleaved into more products, like in toroviruses.</text>
</comment>
<comment type="miscellaneous">
    <molecule>Isoform Replicase polyprotein 1ab</molecule>
    <text>Produced by -1 ribosomal frameshifting at the 1a-1b genes boundary.</text>
</comment>
<feature type="chain" id="PRO_0000408881" description="Replicase polyprotein 1ab">
    <location>
        <begin position="1"/>
        <end position="6872"/>
    </location>
</feature>
<feature type="chain" id="PRO_0000408882" description="N7-guanine methyltransferase" evidence="3">
    <location>
        <begin position="1"/>
        <end position="3071"/>
    </location>
</feature>
<feature type="chain" id="PRO_0000408883" description="Non-structural protein 2" evidence="3">
    <location>
        <begin position="3072"/>
        <end position="3442"/>
    </location>
</feature>
<feature type="chain" id="PRO_0000408884" description="3C-like serine proteinase" evidence="16">
    <location>
        <begin position="3443"/>
        <end position="3709"/>
    </location>
</feature>
<feature type="chain" id="PRO_0000408885" description="Non-structural protein 4" evidence="3">
    <location>
        <begin position="3710"/>
        <end position="3985"/>
    </location>
</feature>
<feature type="chain" id="PRO_0000408886" description="Non-structural protein 5" evidence="3">
    <location>
        <begin position="3986"/>
        <end position="4157"/>
    </location>
</feature>
<feature type="chain" id="PRO_0000408887" description="Non-structural protein 6" evidence="3">
    <location>
        <begin position="4158"/>
        <end position="4375"/>
    </location>
</feature>
<feature type="chain" id="PRO_0000408888" description="Non-structural protein 7" evidence="3">
    <location>
        <begin position="4376"/>
        <end position="4452"/>
    </location>
</feature>
<feature type="chain" id="PRO_0000408889" description="RNA-directed RNA polymerase" evidence="3">
    <location>
        <begin position="4453"/>
        <end position="5396"/>
    </location>
</feature>
<feature type="chain" id="PRO_0000408890" description="Helicase" evidence="3">
    <location>
        <begin position="5397"/>
        <end position="5951"/>
    </location>
</feature>
<feature type="chain" id="PRO_0000408891" description="Exoribonuclease" evidence="3">
    <location>
        <begin position="5952"/>
        <end position="6314"/>
    </location>
</feature>
<feature type="chain" id="PRO_0000408892" description="Non-structural protein 12" evidence="3">
    <location>
        <begin position="6315"/>
        <end position="6462"/>
    </location>
</feature>
<feature type="chain" id="PRO_0000408893" description="Uridylate-specific endoribonuclease" evidence="3">
    <location>
        <begin position="6463"/>
        <end position="6604"/>
    </location>
</feature>
<feature type="chain" id="PRO_0000408894" description="Putative 2'-O-methyl transferase" evidence="3">
    <location>
        <begin position="6605"/>
        <end position="6872"/>
    </location>
</feature>
<feature type="transmembrane region" description="Helical" evidence="3">
    <location>
        <begin position="2542"/>
        <end position="2564"/>
    </location>
</feature>
<feature type="transmembrane region" description="Helical" evidence="3">
    <location>
        <begin position="2571"/>
        <end position="2593"/>
    </location>
</feature>
<feature type="transmembrane region" description="Helical" evidence="3">
    <location>
        <begin position="2644"/>
        <end position="2664"/>
    </location>
</feature>
<feature type="transmembrane region" description="Helical" evidence="3">
    <location>
        <begin position="2744"/>
        <end position="2764"/>
    </location>
</feature>
<feature type="transmembrane region" description="Helical" evidence="3">
    <location>
        <begin position="2773"/>
        <end position="2793"/>
    </location>
</feature>
<feature type="transmembrane region" description="Helical" evidence="3">
    <location>
        <begin position="3079"/>
        <end position="3099"/>
    </location>
</feature>
<feature type="transmembrane region" description="Helical" evidence="3">
    <location>
        <begin position="3247"/>
        <end position="3267"/>
    </location>
</feature>
<feature type="transmembrane region" description="Helical" evidence="3">
    <location>
        <begin position="3278"/>
        <end position="3298"/>
    </location>
</feature>
<feature type="transmembrane region" description="Helical" evidence="3">
    <location>
        <begin position="3319"/>
        <end position="3339"/>
    </location>
</feature>
<feature type="transmembrane region" description="Helical" evidence="3">
    <location>
        <begin position="3725"/>
        <end position="3745"/>
    </location>
</feature>
<feature type="transmembrane region" description="Helical" evidence="3">
    <location>
        <begin position="3751"/>
        <end position="3771"/>
    </location>
</feature>
<feature type="transmembrane region" description="Helical" evidence="3">
    <location>
        <begin position="3789"/>
        <end position="3809"/>
    </location>
</feature>
<feature type="transmembrane region" description="Helical" evidence="3">
    <location>
        <begin position="3813"/>
        <end position="3833"/>
    </location>
</feature>
<feature type="transmembrane region" description="Helical" evidence="3">
    <location>
        <begin position="3844"/>
        <end position="3864"/>
    </location>
</feature>
<feature type="transmembrane region" description="Helical" evidence="3">
    <location>
        <begin position="3888"/>
        <end position="3908"/>
    </location>
</feature>
<feature type="transmembrane region" description="Helical" evidence="3">
    <location>
        <begin position="3911"/>
        <end position="3931"/>
    </location>
</feature>
<feature type="domain" description="mRNA cap 0 methyltransferase" evidence="5 14">
    <location>
        <begin position="1399"/>
        <end position="1621"/>
    </location>
</feature>
<feature type="domain" description="Macro" evidence="4">
    <location>
        <begin position="1637"/>
        <end position="1827"/>
    </location>
</feature>
<feature type="domain" description="NiRAN" evidence="7">
    <location>
        <begin position="4551"/>
        <end position="4779"/>
    </location>
</feature>
<feature type="domain" description="RdRp catalytic">
    <location>
        <begin position="5090"/>
        <end position="5245"/>
    </location>
</feature>
<feature type="domain" description="CV ZBD" evidence="6">
    <location>
        <begin position="5397"/>
        <end position="5513"/>
    </location>
</feature>
<feature type="domain" description="(+)RNA virus helicase ATP-binding">
    <location>
        <begin position="5623"/>
        <end position="5801"/>
    </location>
</feature>
<feature type="domain" description="(+)RNA virus helicase C-terminal">
    <location>
        <begin position="5802"/>
        <end position="5958"/>
    </location>
</feature>
<feature type="domain" description="ExoN" evidence="8">
    <location>
        <begin position="5962"/>
        <end position="6186"/>
    </location>
</feature>
<feature type="domain" description="NendoU" evidence="10">
    <location>
        <begin position="6464"/>
        <end position="6601"/>
    </location>
</feature>
<feature type="domain" description="Nidovirus-type SAM-dependent 2'-O-MTase" evidence="9">
    <location>
        <begin position="6613"/>
        <end position="6872"/>
    </location>
</feature>
<feature type="region of interest" description="Disordered" evidence="11">
    <location>
        <begin position="159"/>
        <end position="183"/>
    </location>
</feature>
<feature type="region of interest" description="Disordered" evidence="11">
    <location>
        <begin position="972"/>
        <end position="1037"/>
    </location>
</feature>
<feature type="region of interest" description="Disordered" evidence="11">
    <location>
        <begin position="1120"/>
        <end position="1200"/>
    </location>
</feature>
<feature type="region of interest" description="Disordered" evidence="11">
    <location>
        <begin position="2037"/>
        <end position="2112"/>
    </location>
</feature>
<feature type="region of interest" description="HD1" evidence="1">
    <location>
        <begin position="2293"/>
        <end position="2683"/>
    </location>
</feature>
<feature type="region of interest" description="HD2" evidence="1">
    <location>
        <begin position="2889"/>
        <end position="3156"/>
    </location>
</feature>
<feature type="region of interest" description="HD3" evidence="1">
    <location>
        <begin position="3546"/>
        <end position="3732"/>
    </location>
</feature>
<feature type="coiled-coil region" evidence="3">
    <location>
        <begin position="4212"/>
        <end position="4250"/>
    </location>
</feature>
<feature type="compositionally biased region" description="Low complexity" evidence="11">
    <location>
        <begin position="163"/>
        <end position="175"/>
    </location>
</feature>
<feature type="compositionally biased region" description="Pro residues" evidence="11">
    <location>
        <begin position="1016"/>
        <end position="1028"/>
    </location>
</feature>
<feature type="compositionally biased region" description="Low complexity" evidence="11">
    <location>
        <begin position="1121"/>
        <end position="1134"/>
    </location>
</feature>
<feature type="compositionally biased region" description="Low complexity" evidence="11">
    <location>
        <begin position="1144"/>
        <end position="1185"/>
    </location>
</feature>
<feature type="compositionally biased region" description="Low complexity" evidence="11">
    <location>
        <begin position="2043"/>
        <end position="2053"/>
    </location>
</feature>
<feature type="compositionally biased region" description="Polar residues" evidence="11">
    <location>
        <begin position="2061"/>
        <end position="2070"/>
    </location>
</feature>
<feature type="compositionally biased region" description="Low complexity" evidence="11">
    <location>
        <begin position="2080"/>
        <end position="2112"/>
    </location>
</feature>
<feature type="active site" description="Charge relay system; for 3C-like serine proteinase activity" evidence="17">
    <location>
        <position position="3492"/>
    </location>
</feature>
<feature type="active site" description="Charge relay system; for 3C-like serine proteinase activity" evidence="17">
    <location>
        <position position="3518"/>
    </location>
</feature>
<feature type="active site" description="Charge relay system; for 3C-like serine proteinase activity" evidence="17">
    <location>
        <position position="3589"/>
    </location>
</feature>
<feature type="active site" evidence="8">
    <location>
        <position position="5980"/>
    </location>
</feature>
<feature type="active site" evidence="8">
    <location>
        <position position="5982"/>
    </location>
</feature>
<feature type="active site" evidence="8">
    <location>
        <position position="6086"/>
    </location>
</feature>
<feature type="active site" evidence="8">
    <location>
        <position position="6169"/>
    </location>
</feature>
<feature type="active site" evidence="8">
    <location>
        <position position="6174"/>
    </location>
</feature>
<feature type="active site" evidence="10">
    <location>
        <position position="6497"/>
    </location>
</feature>
<feature type="active site" evidence="10">
    <location>
        <position position="6514"/>
    </location>
</feature>
<feature type="active site" evidence="10">
    <location>
        <position position="6547"/>
    </location>
</feature>
<feature type="active site" evidence="9">
    <location>
        <position position="6654"/>
    </location>
</feature>
<feature type="active site" evidence="9">
    <location>
        <position position="6729"/>
    </location>
</feature>
<feature type="active site" evidence="9">
    <location>
        <position position="6758"/>
    </location>
</feature>
<feature type="active site" evidence="9">
    <location>
        <position position="6790"/>
    </location>
</feature>
<feature type="binding site" evidence="6">
    <location>
        <position position="5401"/>
    </location>
    <ligand>
        <name>Zn(2+)</name>
        <dbReference type="ChEBI" id="CHEBI:29105"/>
        <label>1</label>
    </ligand>
</feature>
<feature type="binding site" evidence="6">
    <location>
        <position position="5404"/>
    </location>
    <ligand>
        <name>Zn(2+)</name>
        <dbReference type="ChEBI" id="CHEBI:29105"/>
        <label>1</label>
    </ligand>
</feature>
<feature type="binding site" evidence="6">
    <location>
        <position position="5412"/>
    </location>
    <ligand>
        <name>Zn(2+)</name>
        <dbReference type="ChEBI" id="CHEBI:29105"/>
        <label>2</label>
    </ligand>
</feature>
<feature type="binding site" evidence="6">
    <location>
        <position position="5415"/>
    </location>
    <ligand>
        <name>Zn(2+)</name>
        <dbReference type="ChEBI" id="CHEBI:29105"/>
        <label>2</label>
    </ligand>
</feature>
<feature type="binding site" evidence="6">
    <location>
        <position position="5422"/>
    </location>
    <ligand>
        <name>Zn(2+)</name>
        <dbReference type="ChEBI" id="CHEBI:29105"/>
        <label>1</label>
    </ligand>
</feature>
<feature type="binding site" evidence="6">
    <location>
        <position position="5425"/>
    </location>
    <ligand>
        <name>Zn(2+)</name>
        <dbReference type="ChEBI" id="CHEBI:29105"/>
        <label>1</label>
    </ligand>
</feature>
<feature type="binding site" evidence="6">
    <location>
        <position position="5429"/>
    </location>
    <ligand>
        <name>Zn(2+)</name>
        <dbReference type="ChEBI" id="CHEBI:29105"/>
        <label>2</label>
    </ligand>
</feature>
<feature type="binding site" evidence="6">
    <location>
        <position position="5435"/>
    </location>
    <ligand>
        <name>Zn(2+)</name>
        <dbReference type="ChEBI" id="CHEBI:29105"/>
        <label>2</label>
    </ligand>
</feature>
<feature type="binding site" evidence="6">
    <location>
        <position position="5443"/>
    </location>
    <ligand>
        <name>Zn(2+)</name>
        <dbReference type="ChEBI" id="CHEBI:29105"/>
        <label>3</label>
    </ligand>
</feature>
<feature type="binding site" evidence="6">
    <location>
        <position position="5446"/>
    </location>
    <ligand>
        <name>Zn(2+)</name>
        <dbReference type="ChEBI" id="CHEBI:29105"/>
        <label>3</label>
    </ligand>
</feature>
<feature type="binding site" evidence="6">
    <location>
        <position position="5467"/>
    </location>
    <ligand>
        <name>Zn(2+)</name>
        <dbReference type="ChEBI" id="CHEBI:29105"/>
        <label>3</label>
    </ligand>
</feature>
<feature type="binding site" evidence="6">
    <location>
        <position position="5470"/>
    </location>
    <ligand>
        <name>Zn(2+)</name>
        <dbReference type="ChEBI" id="CHEBI:29105"/>
        <label>3</label>
    </ligand>
</feature>
<feature type="binding site" evidence="3">
    <location>
        <begin position="5649"/>
        <end position="5656"/>
    </location>
    <ligand>
        <name>ATP</name>
        <dbReference type="ChEBI" id="CHEBI:30616"/>
    </ligand>
</feature>
<feature type="binding site" evidence="8">
    <location>
        <position position="6101"/>
    </location>
    <ligand>
        <name>Zn(2+)</name>
        <dbReference type="ChEBI" id="CHEBI:29105"/>
        <label>4</label>
    </ligand>
</feature>
<feature type="binding site" evidence="8">
    <location>
        <position position="6104"/>
    </location>
    <ligand>
        <name>Zn(2+)</name>
        <dbReference type="ChEBI" id="CHEBI:29105"/>
        <label>4</label>
    </ligand>
</feature>
<feature type="binding site" evidence="8">
    <location>
        <position position="6122"/>
    </location>
    <ligand>
        <name>Zn(2+)</name>
        <dbReference type="ChEBI" id="CHEBI:29105"/>
        <label>4</label>
    </ligand>
</feature>
<feature type="binding site" evidence="8">
    <location>
        <position position="6125"/>
    </location>
    <ligand>
        <name>Zn(2+)</name>
        <dbReference type="ChEBI" id="CHEBI:29105"/>
        <label>4</label>
    </ligand>
</feature>
<feature type="binding site" evidence="8">
    <location>
        <position position="6157"/>
    </location>
    <ligand>
        <name>Zn(2+)</name>
        <dbReference type="ChEBI" id="CHEBI:29105"/>
        <label>5</label>
    </ligand>
</feature>
<feature type="binding site" evidence="8">
    <location>
        <position position="6161"/>
    </location>
    <ligand>
        <name>Zn(2+)</name>
        <dbReference type="ChEBI" id="CHEBI:29105"/>
        <label>5</label>
    </ligand>
</feature>
<feature type="binding site" evidence="8">
    <location>
        <position position="6165"/>
    </location>
    <ligand>
        <name>Zn(2+)</name>
        <dbReference type="ChEBI" id="CHEBI:29105"/>
        <label>5</label>
    </ligand>
</feature>
<feature type="binding site" evidence="8">
    <location>
        <position position="6180"/>
    </location>
    <ligand>
        <name>Zn(2+)</name>
        <dbReference type="ChEBI" id="CHEBI:29105"/>
        <label>5</label>
    </ligand>
</feature>
<feature type="site" description="Cleavage; by 3C-like serine proteinase">
    <location>
        <begin position="3071"/>
        <end position="3072"/>
    </location>
</feature>
<feature type="site" description="Cleavage; by autolysis" evidence="12">
    <location>
        <begin position="3442"/>
        <end position="3443"/>
    </location>
</feature>
<feature type="site" description="Substrate binding" evidence="3">
    <location>
        <position position="3603"/>
    </location>
</feature>
<feature type="site" description="Cleavage; by autolysis" evidence="12">
    <location>
        <begin position="3709"/>
        <end position="3710"/>
    </location>
</feature>
<feature type="site" description="Cleavage; by 3C-like serine proteinase" evidence="3">
    <location>
        <begin position="3985"/>
        <end position="3986"/>
    </location>
</feature>
<feature type="site" description="Cleavage; by 3C-like serine proteinase" evidence="3">
    <location>
        <begin position="4157"/>
        <end position="4158"/>
    </location>
</feature>
<feature type="site" description="Cleavage; by 3C-like serine proteinase" evidence="3">
    <location>
        <begin position="4375"/>
        <end position="4376"/>
    </location>
</feature>
<feature type="site" description="Cleavage; by 3C-like serine proteinase" evidence="3">
    <location>
        <begin position="4452"/>
        <end position="4453"/>
    </location>
</feature>
<feature type="site" description="Cleavage; by 3C-like serine proteinase" evidence="3">
    <location>
        <begin position="5396"/>
        <end position="5397"/>
    </location>
</feature>
<feature type="site" description="Cleavage; by 3C-like serine proteinase" evidence="3">
    <location>
        <begin position="5951"/>
        <end position="5952"/>
    </location>
</feature>
<feature type="site" description="Cleavage; by 3C-like serine proteinase" evidence="3">
    <location>
        <begin position="6313"/>
        <end position="6314"/>
    </location>
</feature>
<feature type="mutagenesis site" description="Complete loss of N7 methyltransferase activity." evidence="14">
    <original>K</original>
    <variation>A</variation>
    <location>
        <position position="1412"/>
    </location>
</feature>
<feature type="mutagenesis site" description="Complete loss of N7 methyltransferase activity." evidence="14">
    <original>D</original>
    <variation>A</variation>
    <location>
        <position position="1427"/>
    </location>
</feature>
<feature type="mutagenesis site" description="80% loss of N7 methyltransferase activity." evidence="14">
    <original>K</original>
    <variation>A</variation>
    <location>
        <position position="1432"/>
    </location>
</feature>
<feature type="mutagenesis site" description="Complete loss of N7 methyltransferase activity." evidence="14">
    <original>D</original>
    <variation>A</variation>
    <location>
        <position position="1460"/>
    </location>
</feature>
<feature type="mutagenesis site" description="Complete loss of N7 methyltransferase activity." evidence="14">
    <original>E</original>
    <variation>A</variation>
    <location>
        <position position="1553"/>
    </location>
</feature>
<feature type="mutagenesis site" description="Complete loss of N7 methyltransferase activity." evidence="14">
    <original>Y</original>
    <variation>A</variation>
    <location>
        <position position="1613"/>
    </location>
</feature>
<feature type="mutagenesis site" description="Loss of proteolytic processing." evidence="12">
    <original>H</original>
    <variation>A</variation>
    <location>
        <position position="3492"/>
    </location>
</feature>
<feature type="mutagenesis site" description="No effect on proteolytic processing." evidence="12">
    <original>D</original>
    <variation>A</variation>
    <location>
        <position position="3509"/>
    </location>
</feature>
<feature type="mutagenesis site" description="Reduced proteolytic processing." evidence="12">
    <original>D</original>
    <variation>A</variation>
    <location>
        <position position="3518"/>
    </location>
</feature>
<feature type="mutagenesis site" description="Reduced proteolytic processing.">
    <original>T</original>
    <variation>A</variation>
    <location>
        <position position="3584"/>
    </location>
</feature>
<feature type="mutagenesis site" description="Loss of proteolytic processing." evidence="12">
    <original>S</original>
    <variation>A</variation>
    <location>
        <position position="3589"/>
    </location>
</feature>
<feature type="mutagenesis site" description="Loss of proteolytic processing." evidence="12">
    <original>H</original>
    <variation>A</variation>
    <location>
        <position position="3603"/>
    </location>
</feature>
<feature type="helix" evidence="19">
    <location>
        <begin position="1400"/>
        <end position="1418"/>
    </location>
</feature>
<feature type="strand" evidence="19">
    <location>
        <begin position="1424"/>
        <end position="1428"/>
    </location>
</feature>
<feature type="helix" evidence="19">
    <location>
        <begin position="1436"/>
        <end position="1440"/>
    </location>
</feature>
<feature type="strand" evidence="19">
    <location>
        <begin position="1445"/>
        <end position="1449"/>
    </location>
</feature>
<feature type="helix" evidence="19">
    <location>
        <begin position="1453"/>
        <end position="1460"/>
    </location>
</feature>
<feature type="strand" evidence="19">
    <location>
        <begin position="1467"/>
        <end position="1470"/>
    </location>
</feature>
<feature type="helix" evidence="19">
    <location>
        <begin position="1474"/>
        <end position="1480"/>
    </location>
</feature>
<feature type="strand" evidence="19">
    <location>
        <begin position="1486"/>
        <end position="1492"/>
    </location>
</feature>
<feature type="helix" evidence="19">
    <location>
        <begin position="1495"/>
        <end position="1500"/>
    </location>
</feature>
<feature type="helix" evidence="19">
    <location>
        <begin position="1503"/>
        <end position="1509"/>
    </location>
</feature>
<feature type="strand" evidence="19">
    <location>
        <begin position="1515"/>
        <end position="1520"/>
    </location>
</feature>
<feature type="helix" evidence="19">
    <location>
        <begin position="1522"/>
        <end position="1525"/>
    </location>
</feature>
<feature type="strand" evidence="19">
    <location>
        <begin position="1533"/>
        <end position="1538"/>
    </location>
</feature>
<feature type="strand" evidence="19">
    <location>
        <begin position="1541"/>
        <end position="1546"/>
    </location>
</feature>
<feature type="strand" evidence="19">
    <location>
        <begin position="1549"/>
        <end position="1554"/>
    </location>
</feature>
<feature type="helix" evidence="19">
    <location>
        <begin position="1558"/>
        <end position="1568"/>
    </location>
</feature>
<feature type="strand" evidence="19">
    <location>
        <begin position="1569"/>
        <end position="1575"/>
    </location>
</feature>
<feature type="helix" evidence="19">
    <location>
        <begin position="1576"/>
        <end position="1578"/>
    </location>
</feature>
<feature type="helix" evidence="19">
    <location>
        <begin position="1590"/>
        <end position="1602"/>
    </location>
</feature>
<feature type="helix" evidence="19">
    <location>
        <begin position="1604"/>
        <end position="1611"/>
    </location>
</feature>
<feature type="strand" evidence="19">
    <location>
        <begin position="1613"/>
        <end position="1620"/>
    </location>
</feature>
<feature type="helix" evidence="18">
    <location>
        <begin position="1627"/>
        <end position="1630"/>
    </location>
</feature>
<proteinExistence type="evidence at protein level"/>
<sequence length="6872" mass="769510">MSILFGNRQANATKRSDMASVARAVYEVDLISTKYARRTQERLAHNKHAKPSYPSVFFGRRMKAVKEPTFTPSTLFFEEATLPKVLASKAKPDTGIKTRRVYVADSLTINGHTYPIVGHFVEMAVSKKEAFPIQPKRVKPKPLMAKPIPNIRRTFLTPEERTNTPTTPTTTTTTPFVAGETAGPTIEYTPTSIDLPFAMPTVKQIKENAHTILREQDDCLRFAQTALFKHLGTVTHTTPNHATTFQVKGRTSLLTFEWRKTTQSPLTDGHFYLQTANNHAELMQPVEGKLTTIFTTTIQQGTTHSLHLIKQESARTLKTRKPLKLVTYKQETPTTTITPQSLKKTITYIPGSFCINVAEPTLQSVMRRQPLTPTPNDALLQIYHKLGCTTKSPNHASTFELFGNTYTWYPVQHTNNLLHKDPNRRFFLHITGQTPQLLIRTERKTFLTLQDEVTYISGKLFVMNHAPIQGEYKTQTAEWVGSYNMAKTPKAIKPAKTVEYINTTPCHKPATMPAPITYRQCPYTWTLHEPSISKVQRNLFHIPKTATNCLDRIQKALFPEIVTSNQHFPIGFTIQTDTTMQSYEWAILCKKVTRTYYLAVQNHHATLWYKCAQVYMCLSDDIAPTTELQGSVYILNKVTDPGFYQNTRQWCGSNDDLHEPKHLIKNLANGDVNNIAHCSLTPWTTTPLVYSTQKNKLTRKLIHYYNATYTVQVPKENPNAQPSTMKCAYKAYIDLATPTELQIHLDLEIQGKLYSQTAQKKGSKFNKLDIPTFGDILKGTLYVFSSKVLLYEQPKRCTSVCFHLPNNAQSFFFNTETIQTFEDLFARISSEEVEDNLVLIKGFVPCLGAIYITKDLKFIQPELKEDFKHPTTYYTFTTTVDPEQVLYSLHPSFTDIVPPHGFPYYTFAKLNNHIDAWNITDDQADTLAEAQPIIFQWPTEEATITTPYKVLHYEHLEGLDYISLSSFNTVECPEETQSAHDSSSESESEDEELPAHPLSNAPSQASLSSVASTAPPTSPTSSPTPSPTPLQQQVGLKGKEVPVGGWVLVSEEETPSEEVDSPKLLPNEVPLSFDFDLPIEPITRPISPELQQPILTHYEHPTSPTPSVEIEIDFGSYENLTLQTEETVTTEVQPEPTPAPTPEPTIVTETVQETPVPTETTQESTPESTPESTPEPTPESTSESTLEPEHVATPSQSPTHITVTEITHEPETPDSWSERYDSTSNIPEVFNQLSFGSTDSVKITTPKTETPDEPQQPTVETVSAAQQLLQIVQTATPDIAQLMSELPPYRLICIGSYCPILAENISKQLPTAVTTPTDADIPTVIFNVSEETMDTVINTVKTKHQANHLTFSLTTIIALDVPKDKSLPLQQIYDKLTQQDYNTDFIYESHHRQPKESLTHASVLSAYTASYKTTAIKSIADNAVVLDIGYGKGNDGPRYAVRPLTVTGIDTAARMLAIADQNKPENVTLVKQGFFTHITKTSNTYTHVIAFNSLHYPLASSHPDTLVQRLPTCPANILIPCHHLLEGIQTPTYSVVKDEDMWCVKVTKNEFIESSYNYDVFVKALESKYHVTIGSLLDCVEKPSTRSITPTLWTAMRNFVNNDQEMQRILSGYITFNLTPLPPKVEIINDWLDNNATVTINNPFASNEGVTFAVHNIGAITTTEGEFIVNAANKQLNNGTGVTGAIFAAHDKELKLTQAIKALPTYGASDKLESHQHVVQTIIKNNNSTHAINILHAAAPIKVKCTSKNPEVLLAHNETAQSELKETYKAIVDYAQLNKLTHIYLPLFGAGAYGHKPLDSLEAFLDAMRNRSPQSTTQYTLLLSDPVKPLDNPSFSYEFLNLLVTNLNINKQFAQLIVNKYHNTCALQSAIQMNTTTDTHNFLATFIYLLYTMPYSMNTFRQTHTPEEPFTPGKMVTVVDTTIAFLTTLDILPPCGQPCGYLPPSITKDGEYICACQKTSNWSLPFHFYNARYNKVYHTGLNNILTHKHSAFHKSRNAAHFIAKTGPSTSSYPVYMAPVPEILAYNASYRDSCQDNAIEEQSDSQASQSPSSPVTIPVSLPTASPASSVKSALRSDIPITTDQQSTTSASISTATTASTIPTAPLTSSDSNTSVVTSLYGNMEELTYLDASGTSQDFILSETTPFIAHIYHNNEATFIPPGYQLLDTNTNDPIEMYITPPRPIDGSPMISLASTASTTPMTYPLLSIRLTTEELTSFFKTKTDKFHLISHKSCLTVHLFDSPTLNSIAADSTSDAHLYQQHLKDLYTFSDCCSMYTRTEVYNCIEADTPLIRQSEQTKFHPINLDTLIEMVATFPPIVKRYSQTTTPDFTNLTVYFVSNGDIITTPTGSTSEQPPQLKIFLDYQTSSKFTTLVDLTLHEQTEANTIITYHHGEHQLLKPNPSAFYIEFQTYSSFFSRFQTFSTNFFWTLFINFLINVRFCITADSAYFHWQGKPIETTNLNIVYSIGRLDFVLSKHTTPWLTKPTDTLNPLTLIKNTLVQPIAINFHGRIRPLQSTNTRFGATHTPTKLPVHLLNTSLRTHYLSLLSLFQCTFSVFLAYIALLYSFSGHGIFTVVAYFTMLFARYYITSFINFCTSQLTATQVTQWFAAIKAKYTGIYESSQDRVLTVNVTGTNVPYIVKYSTILTVTMYVAFMAFVWTVSTYAAQYTAGERYDRPPYQTVFQKTLNVLGLTETVTYYYPYASLNEACAASTSILCRLGSPFNFHYPSDYTQVRTVQTDTSSPFWLFIIFMPPSFLFIVLPWLILCTITPTVSIAQLLVPSIILNATIVFIYIRRKFTGHCCGPHTCIKHADISRSLQFRPTSQIQHSLTFCGTLCAKHNWYCNNSDSPTHTLGIQLAQLIETTYKLQPGTIKPDSSYTHTTETATLPIMKVSTTSTDFTTSEPNTTVEHLHLQVIAHVTGTRISIESSSNKVQQQNTQHTRLTNKPVTGFMHTTLLQKLKRQHKDELSSYLCNFVPSDNKKDCILPHSVVHMTLTENQRTFLLKNFTFSTNVTVDPTTTGFIPSSLNISTLPHKHFMINVIESAMLAKLPKEVQDTLRTTHLETTTLERQAMSLTTQAILTTFALIMATFVVAFLAFFSTAQVGKTPYAGLNPTMVGNVNAEPYIQPTTLENSILIPLHGASKVCWRAQNGTLFFTDAIPTTECARAAVPYIGYKSEFTQTCASSNLRYPFTVYLGSIKVMYLRDGISYLTSTLSHNSNTKKLCVQVGSNAVRCASVLPTGASSNVAALLMASVVVISMVLFYLYLLQIFKFYTNSVIMSFVIQLLTLLATTVSTPLAVTVQLFVITYGYTNWILLTLSLLNLTVLLSTPVGITFVVIYGLYKAYTLFTSSGQGCVYNEGGTIRFSGSFEQVANSTFPLTNASCVQLLSDLGITYQQLNVYASSRDRNVRRLAQALLHRQLDSASECILYEGCSGNTITRQALQRIRQAVTVVVTPASQNLCKITSNQANGIGLSCTGTFFTSTEIITCAHGIGTSDITAVHKGITYDCKVKSINNDIAILITTTVNLSVQNIKLDSSFSQKSDNYQRNFVQFVSFVDQQNSDAVTINNTVMLPSGHFFAIGTEAGESGSPYTLNGNIIGIHYGIDNAGSWMLASRPDGSFYVPATQHGNSAKVTFSTDAFAQQFPAIVTNKTSDQLVNEIAATNNTAFELDTTDVSHLSNLLKHLKNNNETPKSLSDYLPVAPVTQQTSVTVGQTLTSPVNNMQTALYTLMLVSEVITYILTPNSDLSVLISMFVTSAFLKFGASKLFYNTEMLRNTITTFVVYRYTTLLIALVFSQYYLHILSYALKLNTLVLTVIALTFLVTPLVLLTIRRVYYYSQNYLISCVFIISCFASHTYTLYILTDTTVDFQTFIISEPIFSTLLCNLFIGFTLISVVPNPLYVCVVFMYILLDCEALGFIVTCFMASYLCPKPLRSLTTFLCTDTLVLTAPAYLHWYGAKGTQREYSVIYAVFDSILTPETTIQIPVTIMEGIEQQVKFIFAVPKSANIQDEEEAYVEYNQNSDIKDLAIKNEEKVCTITGMFRKTRTIKGTLMESFYPRHQPDSYILNQVVRHNYVLAHDPETIILTTVNPTHLESEPFQTIVKKVRKLHALYQEISEQSSDDTELCHAYILALIKSTVLEAQMPTEKINFVSSQTMLSPAMILIFAEAYQILTESRSFTNHITPQSDIGSMQTTLASLAEMDTDEMTPQERKIHIKRMNVLKQEIAKMESASLKLEKFLDNMHKAEISKRGKEDILLKVSNMLRLHLNKVANAAHCTIQTPSAGLITLASAFDVHSLCVTQHSESVLIQTPDDDTFLVYVDGQIYTCYNPTDITGKKLVPINVMSPDNVQFPTYPVVFSLSKQDYAEEITEQNNIGYTERTHNFKLKELASGLAVTLDGLVVVTETKELATAFKIGQRYFKFLNTNKTPVARNNTHAIIQLLRNNISQQAVVRIGGSRVSNDHIAISQVPVQTIGYLTYAGISVCRQCATKQDHTCQYAGYFVQIPREHVSNIFNLTDTPPCLHNKFTCTTCQPLQQQSKTQQPPLNLVGQCLGLTLDTAFCPFQTGEYKPSSREFYINILNNNVASLRKVFKKNTASIPSENGTIMLKDTGTAHEIYVAKQLLAKGLPVLQHARFNHDGTDYLIRYYTTPYSLGDLVYAYMVGDFKHMLLALDITDETCLDPGNYSSYYNFKEQLRNKLASVIPNVNKILAAELPLAITLDNIDLNGFLYDFGDYPTNGKVTNYHVVSCMRQIATFCSLDITQFPSPLGYTVDRPKLQQTLITGSYIDKLLAINALVASNPETPATASTLFIEASAPTTQTAAISNPILGMHVLDWDLIKANHTGVELDLIQTQDPSIYAKPDVLSVGDTIFYYGRRRYKHDAYKRPFYDLDLIQRMNSAGLNLSETTGYHYQCGTTTEAVEDFMYYNYNSPKSFDPSYLKSVYTYMRDKFMKIISTDEKLNHQSGAPRMSSMGVGVSGFFQKTVWNALPEDFSPRLLDTASKTVMPFSTNIVKKFQRQKKTRVRTLGGSSFITSSIFRMLHKPVTNKMVQTAQANIGPFLIGISKFNLGFHKYLSAHHPNGIEDCQVMGADYTKCDRSFPVVCRALSAALFYELGHLEPNNHWFLNEMFAFLLDPSFISGHIFNKPGGTTSGDSTTAFSNSFYNYFVHLYIQYLTFLTTEMPPSYQPLCNLAHQAFSTGNTETYDLYFSMADDLNSTEYFLHFLSDDSFIISKPTAFPIFTPANFSMKLQNVLGCYVDPAKSWSADGEIHEFCSSHICKINEKYQYVPDPNNMLAGLICAPEPTPQDKLIWKLVATCAELAVFHFVNPTLFNNIFHLLQSLHAEFVSEHSVNLLPPKLLEIDFYTDLIDSEDVEQYSFLADTLTEKNIIMQSASQCYFCDNATVSTCSDCTVQYPMCAHCAYEHLMLTDHTPTQVLPCHVCDQTDPRHLNHTFVMGTVKVACDNHVEGMALPLVDHARKLVKIPLYQKCEQQKTSVSAIKYTKLFDENDQPLDPNFFFYDHEQSAEHNYLKILNDCYLLDEHTVQTSTTYDFQCLEGNTIQVFHKPAETFGNTAYAEILDSKGRVVLKVTLDPISAQNPNHYYITTTKGVLYRKYSKIRRTIHKPRLANRHILNTLKKATFIIGPPGTGKTTYVMKNFIDTASPANKVAYIAPTHKLVQSMDQAIWDKYNHTVSVSVVKSELNNNKYNYPLNSATKTIMLGTPGAVCTHAGCTLIFDEVTLSQLNTIINAISVVKPSQVIFLGDPLQLGPVTHMRSLSYSYTNFPLFQFCNDSRVLSICYRCPSNIFNLWVKPYTDSNVRIDPHAAGGDAKIIVSDQCSNPDAYQYVQKLARNNPDKVLLCNYKKPIIGLENAVTIDSSQGKTYKHTIVVLLGNTNFTQVINRAIVAMSRSTHSIEVHCSPFIHTKFSELFGWPQNVEKENQITKQLHEYSVTSNITLLPVSELPNHLGSLVVCDLEFFHVRHETTPKVKCTLEVGEMAIITTSLLKQIIIPRKSAFTAETHHKHTFGVPKGKPDMNWDYMKSHKAISQQINTDRTHKIFSHMAATTLNRVVYVLYGAGNDLRALTNLNIVGDYTCEKCTKEATFYTIHREIVHTFCNHHAPSQFPLMGTINAQAIDIQHASANKQSLTNTHAEVCNQQHGDAHTASADTIMTGCLASNFLMKSAIKLDNILTTSAFKPYAPYIQTGSHLTVSSIKFRTLGTGVFSMIDDKLYHFDILPHHSKLSHFLQHSSNQPHSTIVTEIPAGYPSCVKIKGKGCTFCANTIAVITELYEDLAKLGLTLSRPIIQQAYTQVETQILQNITNVSYNQFGEMLIQLKDDTVIPFINDFQTSIHNYSLRSNQPLPNPAIFKNLGIKATLGFSTPWVPVTTTTTEPHIMSTKILKDNNDYYHLSPVQLKASPHAFSSITAGYYIYTTPMINIPNETPAYYLTHFVHGQSTPLDLGYTSTNRLTTKQFIYTPNEDEYKSKLGHHVSVGDTSNVSWTIGGMHVLTAFQNITNYQLVSGPANPIMRINVALERGNKVETTALDTTLQDYYKIATTNKVTVSKTTFFTLDGGQYRMMNFANPDGTIQTSYPVAQAQSQLITNYRIYPSYITWPTFFTNEATDCWAIPNYNAPPKNQTCNINIQKYDQMCDLFAIDLKIPVKGHIHHLGNAGNKYSPGDVVLRQYFDQAHLTSYDLREVVSDIPVLHPNDEWKAHFILSDVYAPDTDFTSLALEYMQNHLRLGGSIMWKMTETSILQVNEIVKYFGSWKAVTFAVNYSSSETFLFCAGYTGVEYNTSIVQNGYMSLLGGYRKDLLFVPFCNDYTGSKAYKDTGRVKVVANHLADKLTPAHYATASIFLNTALH</sequence>
<dbReference type="EC" id="2.1.1.56" evidence="14"/>
<dbReference type="EC" id="3.4.21.-" evidence="12"/>
<dbReference type="EC" id="2.7.7.48"/>
<dbReference type="EC" id="3.6.4.12"/>
<dbReference type="EC" id="3.6.4.13"/>
<dbReference type="EC" id="3.1.13.-" evidence="13"/>
<dbReference type="EC" id="3.1.-.-"/>
<dbReference type="EC" id="2.1.1.57" evidence="2"/>
<dbReference type="EMBL" id="DQ898157">
    <property type="protein sequence ID" value="ABI97394.1"/>
    <property type="molecule type" value="Genomic_RNA"/>
</dbReference>
<dbReference type="PDB" id="7Z05">
    <property type="method" value="X-ray"/>
    <property type="resolution" value="2.33 A"/>
    <property type="chains" value="A=1374-1633"/>
</dbReference>
<dbReference type="PDB" id="7Z2J">
    <property type="method" value="X-ray"/>
    <property type="resolution" value="1.66 A"/>
    <property type="chains" value="A=1374-1633"/>
</dbReference>
<dbReference type="PDBsum" id="7Z05"/>
<dbReference type="PDBsum" id="7Z2J"/>
<dbReference type="SMR" id="Q008X6"/>
<dbReference type="MEROPS" id="S75.001"/>
<dbReference type="KEGG" id="vg:4443112"/>
<dbReference type="Proteomes" id="UP000000680">
    <property type="component" value="Segment"/>
</dbReference>
<dbReference type="GO" id="GO:0033644">
    <property type="term" value="C:host cell membrane"/>
    <property type="evidence" value="ECO:0007669"/>
    <property type="project" value="UniProtKB-SubCell"/>
</dbReference>
<dbReference type="GO" id="GO:0016020">
    <property type="term" value="C:membrane"/>
    <property type="evidence" value="ECO:0007669"/>
    <property type="project" value="UniProtKB-KW"/>
</dbReference>
<dbReference type="GO" id="GO:0000175">
    <property type="term" value="F:3'-5'-RNA exonuclease activity"/>
    <property type="evidence" value="ECO:0007669"/>
    <property type="project" value="InterPro"/>
</dbReference>
<dbReference type="GO" id="GO:0005524">
    <property type="term" value="F:ATP binding"/>
    <property type="evidence" value="ECO:0007669"/>
    <property type="project" value="UniProtKB-KW"/>
</dbReference>
<dbReference type="GO" id="GO:0016887">
    <property type="term" value="F:ATP hydrolysis activity"/>
    <property type="evidence" value="ECO:0007669"/>
    <property type="project" value="RHEA"/>
</dbReference>
<dbReference type="GO" id="GO:0008234">
    <property type="term" value="F:cysteine-type peptidase activity"/>
    <property type="evidence" value="ECO:0007669"/>
    <property type="project" value="UniProtKB-KW"/>
</dbReference>
<dbReference type="GO" id="GO:0004519">
    <property type="term" value="F:endonuclease activity"/>
    <property type="evidence" value="ECO:0007669"/>
    <property type="project" value="UniProtKB-KW"/>
</dbReference>
<dbReference type="GO" id="GO:0004483">
    <property type="term" value="F:mRNA (nucleoside-2'-O-)-methyltransferase activity"/>
    <property type="evidence" value="ECO:0007669"/>
    <property type="project" value="InterPro"/>
</dbReference>
<dbReference type="GO" id="GO:0003723">
    <property type="term" value="F:RNA binding"/>
    <property type="evidence" value="ECO:0007669"/>
    <property type="project" value="InterPro"/>
</dbReference>
<dbReference type="GO" id="GO:0003724">
    <property type="term" value="F:RNA helicase activity"/>
    <property type="evidence" value="ECO:0007669"/>
    <property type="project" value="UniProtKB-EC"/>
</dbReference>
<dbReference type="GO" id="GO:0003968">
    <property type="term" value="F:RNA-directed RNA polymerase activity"/>
    <property type="evidence" value="ECO:0007669"/>
    <property type="project" value="UniProtKB-KW"/>
</dbReference>
<dbReference type="GO" id="GO:0008270">
    <property type="term" value="F:zinc ion binding"/>
    <property type="evidence" value="ECO:0007669"/>
    <property type="project" value="UniProtKB-KW"/>
</dbReference>
<dbReference type="GO" id="GO:0006351">
    <property type="term" value="P:DNA-templated transcription"/>
    <property type="evidence" value="ECO:0007669"/>
    <property type="project" value="InterPro"/>
</dbReference>
<dbReference type="GO" id="GO:0032259">
    <property type="term" value="P:methylation"/>
    <property type="evidence" value="ECO:0007669"/>
    <property type="project" value="UniProtKB-KW"/>
</dbReference>
<dbReference type="GO" id="GO:0006508">
    <property type="term" value="P:proteolysis"/>
    <property type="evidence" value="ECO:0007669"/>
    <property type="project" value="UniProtKB-KW"/>
</dbReference>
<dbReference type="GO" id="GO:0075523">
    <property type="term" value="P:viral translational frameshifting"/>
    <property type="evidence" value="ECO:0007669"/>
    <property type="project" value="UniProtKB-KW"/>
</dbReference>
<dbReference type="CDD" id="cd02440">
    <property type="entry name" value="AdoMet_MTases"/>
    <property type="match status" value="1"/>
</dbReference>
<dbReference type="CDD" id="cd20762">
    <property type="entry name" value="capping_2-OMTase_Nidovirales"/>
    <property type="match status" value="1"/>
</dbReference>
<dbReference type="CDD" id="cd21557">
    <property type="entry name" value="Macro_X_Nsp3-like"/>
    <property type="match status" value="1"/>
</dbReference>
<dbReference type="CDD" id="cd23186">
    <property type="entry name" value="Tobaniviridae_RdRp"/>
    <property type="match status" value="1"/>
</dbReference>
<dbReference type="CDD" id="cd21403">
    <property type="entry name" value="ZBD_tv_SF1_Hel-like"/>
    <property type="match status" value="1"/>
</dbReference>
<dbReference type="Gene3D" id="3.40.220.10">
    <property type="entry name" value="Leucine Aminopeptidase, subunit E, domain 1"/>
    <property type="match status" value="1"/>
</dbReference>
<dbReference type="Gene3D" id="3.40.50.300">
    <property type="entry name" value="P-loop containing nucleotide triphosphate hydrolases"/>
    <property type="match status" value="2"/>
</dbReference>
<dbReference type="Gene3D" id="3.40.50.150">
    <property type="entry name" value="Vaccinia Virus protein VP39"/>
    <property type="match status" value="2"/>
</dbReference>
<dbReference type="InterPro" id="IPR027351">
    <property type="entry name" value="(+)RNA_virus_helicase_core_dom"/>
</dbReference>
<dbReference type="InterPro" id="IPR043502">
    <property type="entry name" value="DNA/RNA_pol_sf"/>
</dbReference>
<dbReference type="InterPro" id="IPR002589">
    <property type="entry name" value="Macro_dom"/>
</dbReference>
<dbReference type="InterPro" id="IPR043472">
    <property type="entry name" value="Macro_dom-like"/>
</dbReference>
<dbReference type="InterPro" id="IPR044371">
    <property type="entry name" value="Macro_X_NSP3-like"/>
</dbReference>
<dbReference type="InterPro" id="IPR041698">
    <property type="entry name" value="Methyltransf_25"/>
</dbReference>
<dbReference type="InterPro" id="IPR004971">
    <property type="entry name" value="mRNA_G-N7_MeTrfase_dom"/>
</dbReference>
<dbReference type="InterPro" id="IPR043609">
    <property type="entry name" value="NendoU_nidovirus"/>
</dbReference>
<dbReference type="InterPro" id="IPR044863">
    <property type="entry name" value="NIRAN"/>
</dbReference>
<dbReference type="InterPro" id="IPR046438">
    <property type="entry name" value="NIV_2_O_MTASE"/>
</dbReference>
<dbReference type="InterPro" id="IPR046436">
    <property type="entry name" value="NIV_EXON"/>
</dbReference>
<dbReference type="InterPro" id="IPR027352">
    <property type="entry name" value="NSP13_ZBD_CoV-like"/>
</dbReference>
<dbReference type="InterPro" id="IPR009461">
    <property type="entry name" value="NSP16_CoV-like"/>
</dbReference>
<dbReference type="InterPro" id="IPR027417">
    <property type="entry name" value="P-loop_NTPase"/>
</dbReference>
<dbReference type="InterPro" id="IPR009003">
    <property type="entry name" value="Peptidase_S1_PA"/>
</dbReference>
<dbReference type="InterPro" id="IPR001205">
    <property type="entry name" value="RNA-dir_pol_C"/>
</dbReference>
<dbReference type="InterPro" id="IPR029063">
    <property type="entry name" value="SAM-dependent_MTases_sf"/>
</dbReference>
<dbReference type="InterPro" id="IPR044336">
    <property type="entry name" value="SF1_Hel_ZBD_tv"/>
</dbReference>
<dbReference type="PANTHER" id="PTHR24216:SF65">
    <property type="entry name" value="PAXILLIN-LIKE PROTEIN 1"/>
    <property type="match status" value="1"/>
</dbReference>
<dbReference type="PANTHER" id="PTHR24216">
    <property type="entry name" value="PAXILLIN-RELATED"/>
    <property type="match status" value="1"/>
</dbReference>
<dbReference type="Pfam" id="PF06460">
    <property type="entry name" value="CoV_Methyltr_2"/>
    <property type="match status" value="1"/>
</dbReference>
<dbReference type="Pfam" id="PF19215">
    <property type="entry name" value="CoV_NSP15_C"/>
    <property type="match status" value="1"/>
</dbReference>
<dbReference type="Pfam" id="PF01661">
    <property type="entry name" value="Macro"/>
    <property type="match status" value="1"/>
</dbReference>
<dbReference type="Pfam" id="PF13649">
    <property type="entry name" value="Methyltransf_25"/>
    <property type="match status" value="1"/>
</dbReference>
<dbReference type="Pfam" id="PF00680">
    <property type="entry name" value="RdRP_1"/>
    <property type="match status" value="1"/>
</dbReference>
<dbReference type="Pfam" id="PF01443">
    <property type="entry name" value="Viral_helicase1"/>
    <property type="match status" value="1"/>
</dbReference>
<dbReference type="SMART" id="SM00506">
    <property type="entry name" value="A1pp"/>
    <property type="match status" value="1"/>
</dbReference>
<dbReference type="SUPFAM" id="SSF56672">
    <property type="entry name" value="DNA/RNA polymerases"/>
    <property type="match status" value="1"/>
</dbReference>
<dbReference type="SUPFAM" id="SSF52949">
    <property type="entry name" value="Macro domain-like"/>
    <property type="match status" value="1"/>
</dbReference>
<dbReference type="SUPFAM" id="SSF52540">
    <property type="entry name" value="P-loop containing nucleoside triphosphate hydrolases"/>
    <property type="match status" value="2"/>
</dbReference>
<dbReference type="SUPFAM" id="SSF53335">
    <property type="entry name" value="S-adenosyl-L-methionine-dependent methyltransferases"/>
    <property type="match status" value="1"/>
</dbReference>
<dbReference type="SUPFAM" id="SSF50494">
    <property type="entry name" value="Trypsin-like serine proteases"/>
    <property type="match status" value="1"/>
</dbReference>
<dbReference type="PROSITE" id="PS51653">
    <property type="entry name" value="CV_ZBD"/>
    <property type="match status" value="1"/>
</dbReference>
<dbReference type="PROSITE" id="PS51154">
    <property type="entry name" value="MACRO"/>
    <property type="match status" value="1"/>
</dbReference>
<dbReference type="PROSITE" id="PS51958">
    <property type="entry name" value="NENDOU"/>
    <property type="match status" value="1"/>
</dbReference>
<dbReference type="PROSITE" id="PS51947">
    <property type="entry name" value="NIRAN"/>
    <property type="match status" value="1"/>
</dbReference>
<dbReference type="PROSITE" id="PS51955">
    <property type="entry name" value="NIV_2_O_MTASE"/>
    <property type="match status" value="1"/>
</dbReference>
<dbReference type="PROSITE" id="PS51953">
    <property type="entry name" value="NIV_EXON"/>
    <property type="match status" value="1"/>
</dbReference>
<dbReference type="PROSITE" id="PS51657">
    <property type="entry name" value="PSRV_HELICASE"/>
    <property type="match status" value="1"/>
</dbReference>
<dbReference type="PROSITE" id="PS51562">
    <property type="entry name" value="RNA_CAP0_MT"/>
    <property type="match status" value="1"/>
</dbReference>
<dbReference type="PROSITE" id="PS00135">
    <property type="entry name" value="TRYPSIN_SER"/>
    <property type="match status" value="1"/>
</dbReference>
<gene>
    <name type="primary">rep</name>
    <name type="ORF">1a-1b</name>
</gene>
<reference key="1">
    <citation type="journal article" date="2006" name="J. Virol.">
        <title>Characterization of White bream virus reveals a novel genetic cluster of nidoviruses.</title>
        <authorList>
            <person name="Schuetze H."/>
            <person name="Ulferts R."/>
            <person name="Schelle B."/>
            <person name="Bayer S."/>
            <person name="Granzow H."/>
            <person name="Hoffmann B."/>
            <person name="Mettenleiter T.C."/>
            <person name="Ziebuhr J."/>
        </authorList>
    </citation>
    <scope>NUCLEOTIDE SEQUENCE [GENOMIC RNA]</scope>
</reference>
<reference key="2">
    <citation type="journal article" date="2011" name="J. Virol.">
        <title>Characterization of Bafinivirus main protease autoprocessing activities.</title>
        <authorList>
            <person name="Ulferts R."/>
            <person name="Mettenleiter T.C."/>
            <person name="Ziebuhr J."/>
        </authorList>
    </citation>
    <scope>FUNCTION (3C-LIKE SERINE PROTEINASE)</scope>
    <scope>ACTIVE SITES (3C-LIKE SERINE PROTEINASE)</scope>
    <scope>MUTAGENESIS OF HIS-3492; ASP-3509; ASP-3518; THR-3584; SER-3589 AND HIS-3603</scope>
    <scope>PROTEOLYTIC CLEAVAGE (REPLICASE POLYPROTEIN 1AB)</scope>
    <scope>CATALYTIC ACTIVITY (3C-LIKE SERINE PROTEINASE)</scope>
</reference>
<reference key="3">
    <citation type="journal article" date="2018" name="J. Gen. Virol.">
        <title>Characterization of a bafinivirus exoribonuclease activity.</title>
        <authorList>
            <person name="Durzynska I."/>
            <person name="Sauerwald M."/>
            <person name="Karl N."/>
            <person name="Madhugiri R."/>
            <person name="Ziebuhr J."/>
        </authorList>
    </citation>
    <scope>FUNCTION (EXORIBONUCLEASE)</scope>
    <scope>CATALYTIC ACTIVITY (EXORIBONUCLEASE)</scope>
    <scope>COFACTOR (EXORIBONUCLEASE)</scope>
</reference>
<reference key="4">
    <citation type="journal article" date="2022" name="Nucleic Acids Res.">
        <title>A second type of N7-guanine RNA cap methyltransferase in an unusual locus of a large RNA virus genome.</title>
        <authorList>
            <person name="Shannon A."/>
            <person name="Sama B."/>
            <person name="Gauffre P."/>
            <person name="Guez T."/>
            <person name="Debart F."/>
            <person name="Vasseur J.J."/>
            <person name="Decroly E."/>
            <person name="Canard B."/>
            <person name="Ferron F."/>
        </authorList>
    </citation>
    <scope>X-RAY CRYSTALLOGRAPHY (1.66 ANGSTROMS) OF 1374-1633</scope>
    <scope>CATALYTIC ACTIVITY (7-GUANINE METHYLTRANSFERASE)</scope>
    <scope>FUNCTION (7-GUANINE METHYLTRANSFERASE)</scope>
    <scope>BIOPHYSICOCHEMICAL PROPERTIES (7-GUANINE METHYLTRANSFERASE)</scope>
    <scope>MUTAGENESIS OF LYS-1412; ASP-1427; LYS-1432; ASP-1460; GLU-1553 AND TYR-1613</scope>
</reference>
<evidence type="ECO:0000250" key="1"/>
<evidence type="ECO:0000250" key="2">
    <source>
        <dbReference type="UniProtKB" id="P0C6X7"/>
    </source>
</evidence>
<evidence type="ECO:0000255" key="3"/>
<evidence type="ECO:0000255" key="4">
    <source>
        <dbReference type="PROSITE-ProRule" id="PRU00490"/>
    </source>
</evidence>
<evidence type="ECO:0000255" key="5">
    <source>
        <dbReference type="PROSITE-ProRule" id="PRU00895"/>
    </source>
</evidence>
<evidence type="ECO:0000255" key="6">
    <source>
        <dbReference type="PROSITE-ProRule" id="PRU00986"/>
    </source>
</evidence>
<evidence type="ECO:0000255" key="7">
    <source>
        <dbReference type="PROSITE-ProRule" id="PRU01292"/>
    </source>
</evidence>
<evidence type="ECO:0000255" key="8">
    <source>
        <dbReference type="PROSITE-ProRule" id="PRU01298"/>
    </source>
</evidence>
<evidence type="ECO:0000255" key="9">
    <source>
        <dbReference type="PROSITE-ProRule" id="PRU01300"/>
    </source>
</evidence>
<evidence type="ECO:0000255" key="10">
    <source>
        <dbReference type="PROSITE-ProRule" id="PRU01303"/>
    </source>
</evidence>
<evidence type="ECO:0000256" key="11">
    <source>
        <dbReference type="SAM" id="MobiDB-lite"/>
    </source>
</evidence>
<evidence type="ECO:0000269" key="12">
    <source>
    </source>
</evidence>
<evidence type="ECO:0000269" key="13">
    <source>
    </source>
</evidence>
<evidence type="ECO:0000269" key="14">
    <source>
    </source>
</evidence>
<evidence type="ECO:0000303" key="15">
    <source>
    </source>
</evidence>
<evidence type="ECO:0000305" key="16"/>
<evidence type="ECO:0000305" key="17">
    <source>
    </source>
</evidence>
<evidence type="ECO:0007829" key="18">
    <source>
        <dbReference type="PDB" id="7Z05"/>
    </source>
</evidence>
<evidence type="ECO:0007829" key="19">
    <source>
        <dbReference type="PDB" id="7Z2J"/>
    </source>
</evidence>
<keyword id="KW-0002">3D-structure</keyword>
<keyword id="KW-0067">ATP-binding</keyword>
<keyword id="KW-0175">Coiled coil</keyword>
<keyword id="KW-0255">Endonuclease</keyword>
<keyword id="KW-0269">Exonuclease</keyword>
<keyword id="KW-0347">Helicase</keyword>
<keyword id="KW-1043">Host membrane</keyword>
<keyword id="KW-0378">Hydrolase</keyword>
<keyword id="KW-0472">Membrane</keyword>
<keyword id="KW-0479">Metal-binding</keyword>
<keyword id="KW-0489">Methyltransferase</keyword>
<keyword id="KW-0540">Nuclease</keyword>
<keyword id="KW-0547">Nucleotide-binding</keyword>
<keyword id="KW-0548">Nucleotidyltransferase</keyword>
<keyword id="KW-0645">Protease</keyword>
<keyword id="KW-1185">Reference proteome</keyword>
<keyword id="KW-0677">Repeat</keyword>
<keyword id="KW-0688">Ribosomal frameshifting</keyword>
<keyword id="KW-0696">RNA-directed RNA polymerase</keyword>
<keyword id="KW-0788">Thiol protease</keyword>
<keyword id="KW-0808">Transferase</keyword>
<keyword id="KW-0812">Transmembrane</keyword>
<keyword id="KW-1133">Transmembrane helix</keyword>
<keyword id="KW-0693">Viral RNA replication</keyword>
<keyword id="KW-0862">Zinc</keyword>
<keyword id="KW-0863">Zinc-finger</keyword>
<name>R1AB_WBV24</name>
<organism>
    <name type="scientific">White bream virus (isolate Blicca bjoerkna L./Germany/DF24/00)</name>
    <name type="common">WBV</name>
    <dbReference type="NCBI Taxonomy" id="766180"/>
    <lineage>
        <taxon>Viruses</taxon>
        <taxon>Riboviria</taxon>
        <taxon>Orthornavirae</taxon>
        <taxon>Pisuviricota</taxon>
        <taxon>Pisoniviricetes</taxon>
        <taxon>Nidovirales</taxon>
        <taxon>Tornidovirineae</taxon>
        <taxon>Tobaniviridae</taxon>
        <taxon>Piscanivirinae</taxon>
        <taxon>Bafinivirus</taxon>
        <taxon>Blicbavirus</taxon>
        <taxon>White bream virus</taxon>
    </lineage>
</organism>
<protein>
    <recommendedName>
        <fullName>Replicase polyprotein 1ab</fullName>
        <shortName>pp1ab</shortName>
    </recommendedName>
    <alternativeName>
        <fullName>ORF1ab polyprotein</fullName>
    </alternativeName>
    <component>
        <recommendedName>
            <fullName>N7-guanine methyltransferase</fullName>
            <ecNumber evidence="14">2.1.1.56</ecNumber>
        </recommendedName>
        <alternativeName>
            <fullName evidence="15">Non-structural protein 1</fullName>
            <shortName>nsp1</shortName>
        </alternativeName>
    </component>
    <component>
        <recommendedName>
            <fullName>Non-structural protein 2</fullName>
            <shortName>nsp2</shortName>
        </recommendedName>
    </component>
    <component>
        <recommendedName>
            <fullName>3C-like serine proteinase</fullName>
            <shortName>3CLSP</shortName>
            <ecNumber evidence="12">3.4.21.-</ecNumber>
        </recommendedName>
        <alternativeName>
            <fullName>M-PRO</fullName>
        </alternativeName>
        <alternativeName>
            <fullName>nsp3</fullName>
        </alternativeName>
        <alternativeName>
            <fullName>p27</fullName>
        </alternativeName>
    </component>
    <component>
        <recommendedName>
            <fullName>Non-structural protein 4</fullName>
            <shortName>nsp4</shortName>
        </recommendedName>
    </component>
    <component>
        <recommendedName>
            <fullName>Non-structural protein 5</fullName>
            <shortName>nsp5</shortName>
        </recommendedName>
    </component>
    <component>
        <recommendedName>
            <fullName>Non-structural protein 6</fullName>
            <shortName>nsp6</shortName>
        </recommendedName>
    </component>
    <component>
        <recommendedName>
            <fullName>Non-structural protein 7</fullName>
            <shortName>nsp7</shortName>
        </recommendedName>
    </component>
    <component>
        <recommendedName>
            <fullName>RNA-directed RNA polymerase</fullName>
            <shortName>Pol</shortName>
            <shortName>RdRp</shortName>
            <ecNumber>2.7.7.48</ecNumber>
        </recommendedName>
        <alternativeName>
            <fullName>nsp9</fullName>
        </alternativeName>
    </component>
    <component>
        <recommendedName>
            <fullName>Helicase</fullName>
            <shortName>Hel</shortName>
            <ecNumber>3.6.4.12</ecNumber>
            <ecNumber>3.6.4.13</ecNumber>
        </recommendedName>
        <alternativeName>
            <fullName>nsp10</fullName>
        </alternativeName>
    </component>
    <component>
        <recommendedName>
            <fullName>Exoribonuclease</fullName>
            <shortName>ExoN</shortName>
            <ecNumber evidence="13">3.1.13.-</ecNumber>
        </recommendedName>
        <alternativeName>
            <fullName>nsp11</fullName>
        </alternativeName>
    </component>
    <component>
        <recommendedName>
            <fullName>Non-structural protein 12</fullName>
            <shortName>nsp12</shortName>
        </recommendedName>
    </component>
    <component>
        <recommendedName>
            <fullName>Uridylate-specific endoribonuclease</fullName>
            <ecNumber>3.1.-.-</ecNumber>
        </recommendedName>
        <alternativeName>
            <fullName>NendoU</fullName>
        </alternativeName>
        <alternativeName>
            <fullName>nsp13</fullName>
        </alternativeName>
    </component>
    <component>
        <recommendedName>
            <fullName>Putative 2'-O-methyl transferase</fullName>
            <ecNumber evidence="2">2.1.1.57</ecNumber>
        </recommendedName>
        <alternativeName>
            <fullName>nsp14</fullName>
        </alternativeName>
    </component>
</protein>